<evidence type="ECO:0000255" key="1">
    <source>
        <dbReference type="HAMAP-Rule" id="MF_00444"/>
    </source>
</evidence>
<gene>
    <name evidence="1" type="primary">clpP</name>
    <name type="ordered locus">USA300HOU_0797</name>
</gene>
<keyword id="KW-0963">Cytoplasm</keyword>
<keyword id="KW-0378">Hydrolase</keyword>
<keyword id="KW-0645">Protease</keyword>
<keyword id="KW-0720">Serine protease</keyword>
<sequence>MNLIPTVIETTNRGERAYDIYSRLLKDRIIMLGSQIDDNVANSIVSQLLFLQAQDSEKDIYLYINSPGGSVTAGFAIYDTIQHIKPDVQTICIGMAASMGSFLLAAGAKGKRFALPNAEVMIHQPLGGAQGQATEIEIAANHILKTREKLNRILSERTGQSIEKIQKDTDRDNFLTAEEAKEYGLIDEVMVPETK</sequence>
<accession>A8Z045</accession>
<proteinExistence type="inferred from homology"/>
<name>CLPP_STAAT</name>
<dbReference type="EC" id="3.4.21.92" evidence="1"/>
<dbReference type="EMBL" id="CP000730">
    <property type="protein sequence ID" value="ABX28818.1"/>
    <property type="molecule type" value="Genomic_DNA"/>
</dbReference>
<dbReference type="RefSeq" id="WP_001049165.1">
    <property type="nucleotide sequence ID" value="NC_010079.1"/>
</dbReference>
<dbReference type="SMR" id="A8Z045"/>
<dbReference type="MEROPS" id="S14.001"/>
<dbReference type="GeneID" id="98345115"/>
<dbReference type="KEGG" id="sax:USA300HOU_0797"/>
<dbReference type="HOGENOM" id="CLU_058707_3_2_9"/>
<dbReference type="GO" id="GO:0005737">
    <property type="term" value="C:cytoplasm"/>
    <property type="evidence" value="ECO:0007669"/>
    <property type="project" value="UniProtKB-SubCell"/>
</dbReference>
<dbReference type="GO" id="GO:0009368">
    <property type="term" value="C:endopeptidase Clp complex"/>
    <property type="evidence" value="ECO:0007669"/>
    <property type="project" value="TreeGrafter"/>
</dbReference>
<dbReference type="GO" id="GO:0004176">
    <property type="term" value="F:ATP-dependent peptidase activity"/>
    <property type="evidence" value="ECO:0007669"/>
    <property type="project" value="InterPro"/>
</dbReference>
<dbReference type="GO" id="GO:0051117">
    <property type="term" value="F:ATPase binding"/>
    <property type="evidence" value="ECO:0007669"/>
    <property type="project" value="TreeGrafter"/>
</dbReference>
<dbReference type="GO" id="GO:0004252">
    <property type="term" value="F:serine-type endopeptidase activity"/>
    <property type="evidence" value="ECO:0007669"/>
    <property type="project" value="UniProtKB-UniRule"/>
</dbReference>
<dbReference type="GO" id="GO:0006515">
    <property type="term" value="P:protein quality control for misfolded or incompletely synthesized proteins"/>
    <property type="evidence" value="ECO:0007669"/>
    <property type="project" value="TreeGrafter"/>
</dbReference>
<dbReference type="CDD" id="cd07017">
    <property type="entry name" value="S14_ClpP_2"/>
    <property type="match status" value="1"/>
</dbReference>
<dbReference type="FunFam" id="3.90.226.10:FF:000001">
    <property type="entry name" value="ATP-dependent Clp protease proteolytic subunit"/>
    <property type="match status" value="1"/>
</dbReference>
<dbReference type="Gene3D" id="3.90.226.10">
    <property type="entry name" value="2-enoyl-CoA Hydratase, Chain A, domain 1"/>
    <property type="match status" value="1"/>
</dbReference>
<dbReference type="HAMAP" id="MF_00444">
    <property type="entry name" value="ClpP"/>
    <property type="match status" value="1"/>
</dbReference>
<dbReference type="InterPro" id="IPR001907">
    <property type="entry name" value="ClpP"/>
</dbReference>
<dbReference type="InterPro" id="IPR029045">
    <property type="entry name" value="ClpP/crotonase-like_dom_sf"/>
</dbReference>
<dbReference type="InterPro" id="IPR023562">
    <property type="entry name" value="ClpP/TepA"/>
</dbReference>
<dbReference type="InterPro" id="IPR033135">
    <property type="entry name" value="ClpP_His_AS"/>
</dbReference>
<dbReference type="InterPro" id="IPR018215">
    <property type="entry name" value="ClpP_Ser_AS"/>
</dbReference>
<dbReference type="NCBIfam" id="TIGR00493">
    <property type="entry name" value="clpP"/>
    <property type="match status" value="1"/>
</dbReference>
<dbReference type="NCBIfam" id="NF001368">
    <property type="entry name" value="PRK00277.1"/>
    <property type="match status" value="1"/>
</dbReference>
<dbReference type="NCBIfam" id="NF009205">
    <property type="entry name" value="PRK12553.1"/>
    <property type="match status" value="1"/>
</dbReference>
<dbReference type="PANTHER" id="PTHR10381">
    <property type="entry name" value="ATP-DEPENDENT CLP PROTEASE PROTEOLYTIC SUBUNIT"/>
    <property type="match status" value="1"/>
</dbReference>
<dbReference type="PANTHER" id="PTHR10381:SF70">
    <property type="entry name" value="ATP-DEPENDENT CLP PROTEASE PROTEOLYTIC SUBUNIT"/>
    <property type="match status" value="1"/>
</dbReference>
<dbReference type="Pfam" id="PF00574">
    <property type="entry name" value="CLP_protease"/>
    <property type="match status" value="1"/>
</dbReference>
<dbReference type="PRINTS" id="PR00127">
    <property type="entry name" value="CLPPROTEASEP"/>
</dbReference>
<dbReference type="SUPFAM" id="SSF52096">
    <property type="entry name" value="ClpP/crotonase"/>
    <property type="match status" value="1"/>
</dbReference>
<dbReference type="PROSITE" id="PS00382">
    <property type="entry name" value="CLP_PROTEASE_HIS"/>
    <property type="match status" value="1"/>
</dbReference>
<dbReference type="PROSITE" id="PS00381">
    <property type="entry name" value="CLP_PROTEASE_SER"/>
    <property type="match status" value="1"/>
</dbReference>
<feature type="chain" id="PRO_1000080904" description="ATP-dependent Clp protease proteolytic subunit">
    <location>
        <begin position="1"/>
        <end position="195"/>
    </location>
</feature>
<feature type="active site" description="Nucleophile" evidence="1">
    <location>
        <position position="98"/>
    </location>
</feature>
<feature type="active site" evidence="1">
    <location>
        <position position="123"/>
    </location>
</feature>
<reference key="1">
    <citation type="journal article" date="2007" name="BMC Microbiol.">
        <title>Subtle genetic changes enhance virulence of methicillin resistant and sensitive Staphylococcus aureus.</title>
        <authorList>
            <person name="Highlander S.K."/>
            <person name="Hulten K.G."/>
            <person name="Qin X."/>
            <person name="Jiang H."/>
            <person name="Yerrapragada S."/>
            <person name="Mason E.O. Jr."/>
            <person name="Shang Y."/>
            <person name="Williams T.M."/>
            <person name="Fortunov R.M."/>
            <person name="Liu Y."/>
            <person name="Igboeli O."/>
            <person name="Petrosino J."/>
            <person name="Tirumalai M."/>
            <person name="Uzman A."/>
            <person name="Fox G.E."/>
            <person name="Cardenas A.M."/>
            <person name="Muzny D.M."/>
            <person name="Hemphill L."/>
            <person name="Ding Y."/>
            <person name="Dugan S."/>
            <person name="Blyth P.R."/>
            <person name="Buhay C.J."/>
            <person name="Dinh H.H."/>
            <person name="Hawes A.C."/>
            <person name="Holder M."/>
            <person name="Kovar C.L."/>
            <person name="Lee S.L."/>
            <person name="Liu W."/>
            <person name="Nazareth L.V."/>
            <person name="Wang Q."/>
            <person name="Zhou J."/>
            <person name="Kaplan S.L."/>
            <person name="Weinstock G.M."/>
        </authorList>
    </citation>
    <scope>NUCLEOTIDE SEQUENCE [LARGE SCALE GENOMIC DNA]</scope>
    <source>
        <strain>USA300 / TCH1516</strain>
    </source>
</reference>
<comment type="function">
    <text evidence="1">Cleaves peptides in various proteins in a process that requires ATP hydrolysis. Has a chymotrypsin-like activity. Plays a major role in the degradation of misfolded proteins.</text>
</comment>
<comment type="catalytic activity">
    <reaction evidence="1">
        <text>Hydrolysis of proteins to small peptides in the presence of ATP and magnesium. alpha-casein is the usual test substrate. In the absence of ATP, only oligopeptides shorter than five residues are hydrolyzed (such as succinyl-Leu-Tyr-|-NHMec, and Leu-Tyr-Leu-|-Tyr-Trp, in which cleavage of the -Tyr-|-Leu- and -Tyr-|-Trp bonds also occurs).</text>
        <dbReference type="EC" id="3.4.21.92"/>
    </reaction>
</comment>
<comment type="subunit">
    <text evidence="1">Fourteen ClpP subunits assemble into 2 heptameric rings which stack back to back to give a disk-like structure with a central cavity, resembling the structure of eukaryotic proteasomes.</text>
</comment>
<comment type="subcellular location">
    <subcellularLocation>
        <location evidence="1">Cytoplasm</location>
    </subcellularLocation>
</comment>
<comment type="similarity">
    <text evidence="1">Belongs to the peptidase S14 family.</text>
</comment>
<protein>
    <recommendedName>
        <fullName evidence="1">ATP-dependent Clp protease proteolytic subunit</fullName>
        <ecNumber evidence="1">3.4.21.92</ecNumber>
    </recommendedName>
    <alternativeName>
        <fullName evidence="1">Endopeptidase Clp</fullName>
    </alternativeName>
</protein>
<organism>
    <name type="scientific">Staphylococcus aureus (strain USA300 / TCH1516)</name>
    <dbReference type="NCBI Taxonomy" id="451516"/>
    <lineage>
        <taxon>Bacteria</taxon>
        <taxon>Bacillati</taxon>
        <taxon>Bacillota</taxon>
        <taxon>Bacilli</taxon>
        <taxon>Bacillales</taxon>
        <taxon>Staphylococcaceae</taxon>
        <taxon>Staphylococcus</taxon>
    </lineage>
</organism>